<reference key="1">
    <citation type="journal article" date="2008" name="Environ. Microbiol.">
        <title>The genome of Erwinia tasmaniensis strain Et1/99, a non-pathogenic bacterium in the genus Erwinia.</title>
        <authorList>
            <person name="Kube M."/>
            <person name="Migdoll A.M."/>
            <person name="Mueller I."/>
            <person name="Kuhl H."/>
            <person name="Beck A."/>
            <person name="Reinhardt R."/>
            <person name="Geider K."/>
        </authorList>
    </citation>
    <scope>NUCLEOTIDE SEQUENCE [LARGE SCALE GENOMIC DNA]</scope>
    <source>
        <strain>DSM 17950 / CFBP 7177 / CIP 109463 / NCPPB 4357 / Et1/99</strain>
    </source>
</reference>
<accession>B2VCE1</accession>
<keyword id="KW-0067">ATP-binding</keyword>
<keyword id="KW-0963">Cytoplasm</keyword>
<keyword id="KW-0227">DNA damage</keyword>
<keyword id="KW-0234">DNA repair</keyword>
<keyword id="KW-0235">DNA replication</keyword>
<keyword id="KW-0238">DNA-binding</keyword>
<keyword id="KW-0547">Nucleotide-binding</keyword>
<keyword id="KW-1185">Reference proteome</keyword>
<keyword id="KW-0742">SOS response</keyword>
<gene>
    <name evidence="1" type="primary">recF</name>
    <name type="ordered locus">ETA_34510</name>
</gene>
<comment type="function">
    <text evidence="1">The RecF protein is involved in DNA metabolism; it is required for DNA replication and normal SOS inducibility. RecF binds preferentially to single-stranded, linear DNA. It also seems to bind ATP.</text>
</comment>
<comment type="subcellular location">
    <subcellularLocation>
        <location evidence="1">Cytoplasm</location>
    </subcellularLocation>
</comment>
<comment type="similarity">
    <text evidence="1">Belongs to the RecF family.</text>
</comment>
<evidence type="ECO:0000255" key="1">
    <source>
        <dbReference type="HAMAP-Rule" id="MF_00365"/>
    </source>
</evidence>
<dbReference type="EMBL" id="CU468135">
    <property type="protein sequence ID" value="CAO98497.1"/>
    <property type="molecule type" value="Genomic_DNA"/>
</dbReference>
<dbReference type="RefSeq" id="WP_012443120.1">
    <property type="nucleotide sequence ID" value="NC_010694.1"/>
</dbReference>
<dbReference type="SMR" id="B2VCE1"/>
<dbReference type="STRING" id="465817.ETA_34510"/>
<dbReference type="KEGG" id="eta:ETA_34510"/>
<dbReference type="eggNOG" id="COG1195">
    <property type="taxonomic scope" value="Bacteria"/>
</dbReference>
<dbReference type="HOGENOM" id="CLU_040267_0_0_6"/>
<dbReference type="OrthoDB" id="9803889at2"/>
<dbReference type="Proteomes" id="UP000001726">
    <property type="component" value="Chromosome"/>
</dbReference>
<dbReference type="GO" id="GO:0005737">
    <property type="term" value="C:cytoplasm"/>
    <property type="evidence" value="ECO:0007669"/>
    <property type="project" value="UniProtKB-SubCell"/>
</dbReference>
<dbReference type="GO" id="GO:0005524">
    <property type="term" value="F:ATP binding"/>
    <property type="evidence" value="ECO:0007669"/>
    <property type="project" value="UniProtKB-UniRule"/>
</dbReference>
<dbReference type="GO" id="GO:0003697">
    <property type="term" value="F:single-stranded DNA binding"/>
    <property type="evidence" value="ECO:0007669"/>
    <property type="project" value="UniProtKB-UniRule"/>
</dbReference>
<dbReference type="GO" id="GO:0006260">
    <property type="term" value="P:DNA replication"/>
    <property type="evidence" value="ECO:0007669"/>
    <property type="project" value="UniProtKB-UniRule"/>
</dbReference>
<dbReference type="GO" id="GO:0000731">
    <property type="term" value="P:DNA synthesis involved in DNA repair"/>
    <property type="evidence" value="ECO:0007669"/>
    <property type="project" value="TreeGrafter"/>
</dbReference>
<dbReference type="GO" id="GO:0006302">
    <property type="term" value="P:double-strand break repair"/>
    <property type="evidence" value="ECO:0007669"/>
    <property type="project" value="TreeGrafter"/>
</dbReference>
<dbReference type="GO" id="GO:0009432">
    <property type="term" value="P:SOS response"/>
    <property type="evidence" value="ECO:0007669"/>
    <property type="project" value="UniProtKB-UniRule"/>
</dbReference>
<dbReference type="FunFam" id="1.20.1050.90:FF:000001">
    <property type="entry name" value="DNA replication and repair protein RecF"/>
    <property type="match status" value="1"/>
</dbReference>
<dbReference type="Gene3D" id="3.40.50.300">
    <property type="entry name" value="P-loop containing nucleotide triphosphate hydrolases"/>
    <property type="match status" value="1"/>
</dbReference>
<dbReference type="Gene3D" id="1.20.1050.90">
    <property type="entry name" value="RecF/RecN/SMC, N-terminal domain"/>
    <property type="match status" value="1"/>
</dbReference>
<dbReference type="HAMAP" id="MF_00365">
    <property type="entry name" value="RecF"/>
    <property type="match status" value="1"/>
</dbReference>
<dbReference type="InterPro" id="IPR001238">
    <property type="entry name" value="DNA-binding_RecF"/>
</dbReference>
<dbReference type="InterPro" id="IPR018078">
    <property type="entry name" value="DNA-binding_RecF_CS"/>
</dbReference>
<dbReference type="InterPro" id="IPR027417">
    <property type="entry name" value="P-loop_NTPase"/>
</dbReference>
<dbReference type="InterPro" id="IPR003395">
    <property type="entry name" value="RecF/RecN/SMC_N"/>
</dbReference>
<dbReference type="InterPro" id="IPR042174">
    <property type="entry name" value="RecF_2"/>
</dbReference>
<dbReference type="NCBIfam" id="TIGR00611">
    <property type="entry name" value="recf"/>
    <property type="match status" value="1"/>
</dbReference>
<dbReference type="PANTHER" id="PTHR32182">
    <property type="entry name" value="DNA REPLICATION AND REPAIR PROTEIN RECF"/>
    <property type="match status" value="1"/>
</dbReference>
<dbReference type="PANTHER" id="PTHR32182:SF0">
    <property type="entry name" value="DNA REPLICATION AND REPAIR PROTEIN RECF"/>
    <property type="match status" value="1"/>
</dbReference>
<dbReference type="Pfam" id="PF02463">
    <property type="entry name" value="SMC_N"/>
    <property type="match status" value="1"/>
</dbReference>
<dbReference type="SUPFAM" id="SSF52540">
    <property type="entry name" value="P-loop containing nucleoside triphosphate hydrolases"/>
    <property type="match status" value="1"/>
</dbReference>
<dbReference type="PROSITE" id="PS00617">
    <property type="entry name" value="RECF_1"/>
    <property type="match status" value="1"/>
</dbReference>
<dbReference type="PROSITE" id="PS00618">
    <property type="entry name" value="RECF_2"/>
    <property type="match status" value="1"/>
</dbReference>
<organism>
    <name type="scientific">Erwinia tasmaniensis (strain DSM 17950 / CFBP 7177 / CIP 109463 / NCPPB 4357 / Et1/99)</name>
    <dbReference type="NCBI Taxonomy" id="465817"/>
    <lineage>
        <taxon>Bacteria</taxon>
        <taxon>Pseudomonadati</taxon>
        <taxon>Pseudomonadota</taxon>
        <taxon>Gammaproteobacteria</taxon>
        <taxon>Enterobacterales</taxon>
        <taxon>Erwiniaceae</taxon>
        <taxon>Erwinia</taxon>
    </lineage>
</organism>
<proteinExistence type="inferred from homology"/>
<feature type="chain" id="PRO_1000121116" description="DNA replication and repair protein RecF">
    <location>
        <begin position="1"/>
        <end position="361"/>
    </location>
</feature>
<feature type="binding site" evidence="1">
    <location>
        <begin position="30"/>
        <end position="37"/>
    </location>
    <ligand>
        <name>ATP</name>
        <dbReference type="ChEBI" id="CHEBI:30616"/>
    </ligand>
</feature>
<name>RECF_ERWT9</name>
<sequence>MALTRLLIKDFRNIENADLALAPGFNFLVGPNGSGKTSVLEAIYTLGHGRAFRSLQAGRVIRHDQDAFVLHGRIATAEREISVGLTKNRAGDSKVRIDGSDGHKVAELAQMLPMQLITPEGFTLLNGGPKYRRAYIDWGCFHNEPGFFHAWSNLRRLLKQRNAALRQVSRYQQIRAWDQELAPLAEQISQWRAAYSEAIAADISATCAQFLPEFQLSFSFQRGWDKESHYAELLERNFERDRALTYTASGPHKADFRIRAEGTPVEDLLSRGQLKLLMCALRLAQGEFLTRQNGQRCLYLIDDFASELDETRRHLLAARLKATQAQVFVSAIAAEHVFDMTDEKGKMFHVEQGKIAVQPED</sequence>
<protein>
    <recommendedName>
        <fullName evidence="1">DNA replication and repair protein RecF</fullName>
    </recommendedName>
</protein>